<keyword id="KW-0067">ATP-binding</keyword>
<keyword id="KW-0342">GTP-binding</keyword>
<keyword id="KW-0547">Nucleotide-binding</keyword>
<gene>
    <name type="ordered locus">NGK_0463</name>
</gene>
<proteinExistence type="inferred from homology"/>
<reference key="1">
    <citation type="journal article" date="2008" name="J. Bacteriol.">
        <title>Complete genome sequence of Neisseria gonorrhoeae NCCP11945.</title>
        <authorList>
            <person name="Chung G.T."/>
            <person name="Yoo J.S."/>
            <person name="Oh H.B."/>
            <person name="Lee Y.S."/>
            <person name="Cha S.H."/>
            <person name="Kim S.J."/>
            <person name="Yoo C.K."/>
        </authorList>
    </citation>
    <scope>NUCLEOTIDE SEQUENCE [LARGE SCALE GENOMIC DNA]</scope>
    <source>
        <strain>NCCP11945</strain>
    </source>
</reference>
<sequence>MKIVLISGLSGSGKSVALRQMEDLGYFCVDNLPLEMLPSLVSYHIERADETELAVSVDVRSGIDIAQAREQIAYLRGLGHRVEVLFVEAEEAVLVRRFSETRRGHPLSNQDMTLLESLKKEREWLFPLKEIAYCIDTSKMNAQQLRHAVRQWLKVERTGLLVVLESFGFKYGVPNNADFMFDMRSLPNPYYDPELRPYTGMDKPVWDYLDGQPLAQEMVDGIERFVTRWLPRLEDESRSYVTVAIGCTGGQHRSVYIVEKLARRLKGRYELLIRHRQAQNLSGR</sequence>
<evidence type="ECO:0000255" key="1">
    <source>
        <dbReference type="HAMAP-Rule" id="MF_00636"/>
    </source>
</evidence>
<dbReference type="EMBL" id="CP001050">
    <property type="protein sequence ID" value="ACF29154.1"/>
    <property type="molecule type" value="Genomic_DNA"/>
</dbReference>
<dbReference type="SMR" id="B4RK03"/>
<dbReference type="KEGG" id="ngk:NGK_0463"/>
<dbReference type="HOGENOM" id="CLU_059558_1_1_4"/>
<dbReference type="Proteomes" id="UP000002564">
    <property type="component" value="Chromosome"/>
</dbReference>
<dbReference type="GO" id="GO:0005524">
    <property type="term" value="F:ATP binding"/>
    <property type="evidence" value="ECO:0007669"/>
    <property type="project" value="UniProtKB-UniRule"/>
</dbReference>
<dbReference type="GO" id="GO:0005525">
    <property type="term" value="F:GTP binding"/>
    <property type="evidence" value="ECO:0007669"/>
    <property type="project" value="UniProtKB-UniRule"/>
</dbReference>
<dbReference type="Gene3D" id="3.40.50.300">
    <property type="entry name" value="P-loop containing nucleotide triphosphate hydrolases"/>
    <property type="match status" value="1"/>
</dbReference>
<dbReference type="HAMAP" id="MF_00636">
    <property type="entry name" value="RapZ_like"/>
    <property type="match status" value="1"/>
</dbReference>
<dbReference type="InterPro" id="IPR027417">
    <property type="entry name" value="P-loop_NTPase"/>
</dbReference>
<dbReference type="InterPro" id="IPR005337">
    <property type="entry name" value="RapZ-like"/>
</dbReference>
<dbReference type="InterPro" id="IPR053930">
    <property type="entry name" value="RapZ-like_N"/>
</dbReference>
<dbReference type="InterPro" id="IPR053931">
    <property type="entry name" value="RapZ_C"/>
</dbReference>
<dbReference type="NCBIfam" id="NF003828">
    <property type="entry name" value="PRK05416.1"/>
    <property type="match status" value="1"/>
</dbReference>
<dbReference type="PANTHER" id="PTHR30448">
    <property type="entry name" value="RNASE ADAPTER PROTEIN RAPZ"/>
    <property type="match status" value="1"/>
</dbReference>
<dbReference type="PANTHER" id="PTHR30448:SF0">
    <property type="entry name" value="RNASE ADAPTER PROTEIN RAPZ"/>
    <property type="match status" value="1"/>
</dbReference>
<dbReference type="Pfam" id="PF22740">
    <property type="entry name" value="PapZ_C"/>
    <property type="match status" value="1"/>
</dbReference>
<dbReference type="Pfam" id="PF03668">
    <property type="entry name" value="RapZ-like_N"/>
    <property type="match status" value="1"/>
</dbReference>
<dbReference type="PIRSF" id="PIRSF005052">
    <property type="entry name" value="P-loopkin"/>
    <property type="match status" value="1"/>
</dbReference>
<dbReference type="SUPFAM" id="SSF52540">
    <property type="entry name" value="P-loop containing nucleoside triphosphate hydrolases"/>
    <property type="match status" value="1"/>
</dbReference>
<protein>
    <recommendedName>
        <fullName evidence="1">Nucleotide-binding protein NGK_0463</fullName>
    </recommendedName>
</protein>
<accession>B4RK03</accession>
<comment type="function">
    <text evidence="1">Displays ATPase and GTPase activities.</text>
</comment>
<comment type="similarity">
    <text evidence="1">Belongs to the RapZ-like family.</text>
</comment>
<feature type="chain" id="PRO_1000130770" description="Nucleotide-binding protein NGK_0463">
    <location>
        <begin position="1"/>
        <end position="284"/>
    </location>
</feature>
<feature type="binding site" evidence="1">
    <location>
        <begin position="8"/>
        <end position="15"/>
    </location>
    <ligand>
        <name>ATP</name>
        <dbReference type="ChEBI" id="CHEBI:30616"/>
    </ligand>
</feature>
<feature type="binding site" evidence="1">
    <location>
        <begin position="58"/>
        <end position="61"/>
    </location>
    <ligand>
        <name>GTP</name>
        <dbReference type="ChEBI" id="CHEBI:37565"/>
    </ligand>
</feature>
<organism>
    <name type="scientific">Neisseria gonorrhoeae (strain NCCP11945)</name>
    <dbReference type="NCBI Taxonomy" id="521006"/>
    <lineage>
        <taxon>Bacteria</taxon>
        <taxon>Pseudomonadati</taxon>
        <taxon>Pseudomonadota</taxon>
        <taxon>Betaproteobacteria</taxon>
        <taxon>Neisseriales</taxon>
        <taxon>Neisseriaceae</taxon>
        <taxon>Neisseria</taxon>
    </lineage>
</organism>
<name>Y463_NEIG2</name>